<gene>
    <name type="primary">Retnla</name>
    <name type="synonym">Fizz1</name>
    <name type="synonym">Himf</name>
    <name type="synonym">Pmng1</name>
</gene>
<feature type="signal peptide" evidence="2">
    <location>
        <begin position="1"/>
        <end position="23"/>
    </location>
</feature>
<feature type="chain" id="PRO_0000030343" description="Resistin-like alpha">
    <location>
        <begin position="24"/>
        <end position="111"/>
    </location>
</feature>
<feature type="disulfide bond" evidence="1">
    <location>
        <begin position="55"/>
        <end position="108"/>
    </location>
</feature>
<feature type="disulfide bond" evidence="1">
    <location>
        <begin position="67"/>
        <end position="107"/>
    </location>
</feature>
<feature type="disulfide bond" evidence="1">
    <location>
        <begin position="76"/>
        <end position="93"/>
    </location>
</feature>
<feature type="disulfide bond" evidence="1">
    <location>
        <begin position="78"/>
        <end position="95"/>
    </location>
</feature>
<feature type="disulfide bond" evidence="1">
    <location>
        <begin position="82"/>
        <end position="97"/>
    </location>
</feature>
<proteinExistence type="evidence at protein level"/>
<comment type="function">
    <text evidence="4">Probable hormone. Plays a role in pulmonary vascular remodeling.</text>
</comment>
<comment type="subunit">
    <text evidence="3">Monomer.</text>
</comment>
<comment type="subcellular location">
    <subcellularLocation>
        <location>Secreted</location>
    </subcellularLocation>
</comment>
<comment type="tissue specificity">
    <text>Highest levels in adipose tissue.</text>
</comment>
<comment type="similarity">
    <text evidence="5">Belongs to the resistin/FIZZ family.</text>
</comment>
<comment type="sequence caution" evidence="5">
    <conflict type="erroneous initiation">
        <sequence resource="EMBL-CDS" id="BAB25104"/>
    </conflict>
    <text>Extended N-terminus.</text>
</comment>
<dbReference type="EMBL" id="AF205951">
    <property type="protein sequence ID" value="AAG02143.1"/>
    <property type="molecule type" value="mRNA"/>
</dbReference>
<dbReference type="EMBL" id="AF323082">
    <property type="protein sequence ID" value="AAG59825.1"/>
    <property type="molecule type" value="mRNA"/>
</dbReference>
<dbReference type="EMBL" id="AF316397">
    <property type="protein sequence ID" value="AAG41427.1"/>
    <property type="molecule type" value="mRNA"/>
</dbReference>
<dbReference type="EMBL" id="AF290872">
    <property type="protein sequence ID" value="AAK83104.1"/>
    <property type="molecule type" value="mRNA"/>
</dbReference>
<dbReference type="EMBL" id="AK007553">
    <property type="protein sequence ID" value="BAB25104.1"/>
    <property type="status" value="ALT_INIT"/>
    <property type="molecule type" value="mRNA"/>
</dbReference>
<dbReference type="CCDS" id="CCDS49864.2"/>
<dbReference type="RefSeq" id="NP_065255.3">
    <property type="nucleotide sequence ID" value="NM_020509.4"/>
</dbReference>
<dbReference type="SMR" id="Q9EP95"/>
<dbReference type="FunCoup" id="Q9EP95">
    <property type="interactions" value="199"/>
</dbReference>
<dbReference type="STRING" id="10090.ENSMUSP00000023329"/>
<dbReference type="TCDB" id="9.B.329.1.1">
    <property type="family name" value="the resistin-like molecule (relm) family"/>
</dbReference>
<dbReference type="jPOST" id="Q9EP95"/>
<dbReference type="PaxDb" id="10090-ENSMUSP00000023329"/>
<dbReference type="PeptideAtlas" id="Q9EP95"/>
<dbReference type="ProteomicsDB" id="253221"/>
<dbReference type="Ensembl" id="ENSMUST00000238847.2">
    <property type="protein sequence ID" value="ENSMUSP00000159097.2"/>
    <property type="gene ID" value="ENSMUSG00000061100.6"/>
</dbReference>
<dbReference type="GeneID" id="57262"/>
<dbReference type="KEGG" id="mmu:57262"/>
<dbReference type="AGR" id="MGI:1888504"/>
<dbReference type="CTD" id="57262"/>
<dbReference type="MGI" id="MGI:1888504">
    <property type="gene designation" value="Retnla"/>
</dbReference>
<dbReference type="VEuPathDB" id="HostDB:ENSMUSG00000061100"/>
<dbReference type="eggNOG" id="ENOG502RTZZ">
    <property type="taxonomic scope" value="Eukaryota"/>
</dbReference>
<dbReference type="GeneTree" id="ENSGT00390000016177"/>
<dbReference type="InParanoid" id="Q9EP95"/>
<dbReference type="OMA" id="FLRFCPR"/>
<dbReference type="OrthoDB" id="10065422at2759"/>
<dbReference type="PhylomeDB" id="Q9EP95"/>
<dbReference type="BioGRID-ORCS" id="57262">
    <property type="hits" value="2 hits in 78 CRISPR screens"/>
</dbReference>
<dbReference type="ChiTaRS" id="Retnla">
    <property type="organism name" value="mouse"/>
</dbReference>
<dbReference type="PRO" id="PR:Q9EP95"/>
<dbReference type="Proteomes" id="UP000000589">
    <property type="component" value="Chromosome 16"/>
</dbReference>
<dbReference type="RNAct" id="Q9EP95">
    <property type="molecule type" value="protein"/>
</dbReference>
<dbReference type="Bgee" id="ENSMUSG00000061100">
    <property type="expression patterns" value="Expressed in left lung lobe and 83 other cell types or tissues"/>
</dbReference>
<dbReference type="ExpressionAtlas" id="Q9EP95">
    <property type="expression patterns" value="baseline and differential"/>
</dbReference>
<dbReference type="GO" id="GO:0005576">
    <property type="term" value="C:extracellular region"/>
    <property type="evidence" value="ECO:0000314"/>
    <property type="project" value="MGI"/>
</dbReference>
<dbReference type="GO" id="GO:0005179">
    <property type="term" value="F:hormone activity"/>
    <property type="evidence" value="ECO:0007669"/>
    <property type="project" value="UniProtKB-KW"/>
</dbReference>
<dbReference type="GO" id="GO:0009624">
    <property type="term" value="P:response to nematode"/>
    <property type="evidence" value="ECO:0000314"/>
    <property type="project" value="MGI"/>
</dbReference>
<dbReference type="GO" id="GO:0010269">
    <property type="term" value="P:response to selenium ion"/>
    <property type="evidence" value="ECO:0000314"/>
    <property type="project" value="MGI"/>
</dbReference>
<dbReference type="CDD" id="cd16333">
    <property type="entry name" value="RELM"/>
    <property type="match status" value="1"/>
</dbReference>
<dbReference type="FunFam" id="2.60.40.4230:FF:000002">
    <property type="entry name" value="Resistin-like alpha"/>
    <property type="match status" value="1"/>
</dbReference>
<dbReference type="Gene3D" id="2.60.40.4230">
    <property type="entry name" value="Resistin head domain"/>
    <property type="match status" value="1"/>
</dbReference>
<dbReference type="InterPro" id="IPR009714">
    <property type="entry name" value="RELM"/>
</dbReference>
<dbReference type="InterPro" id="IPR036262">
    <property type="entry name" value="Resistin-like_sf"/>
</dbReference>
<dbReference type="PANTHER" id="PTHR21101">
    <property type="entry name" value="RESISTIN"/>
    <property type="match status" value="1"/>
</dbReference>
<dbReference type="PANTHER" id="PTHR21101:SF5">
    <property type="entry name" value="RESISTIN-LIKE ALPHA"/>
    <property type="match status" value="1"/>
</dbReference>
<dbReference type="Pfam" id="PF06954">
    <property type="entry name" value="Resistin"/>
    <property type="match status" value="1"/>
</dbReference>
<dbReference type="SUPFAM" id="SSF111423">
    <property type="entry name" value="Resistin"/>
    <property type="match status" value="1"/>
</dbReference>
<reference key="1">
    <citation type="journal article" date="2000" name="EMBO J.">
        <title>FIZZ1, a novel cysteine-rich secreted protein associated with pulmonary inflammation, defines a new gene family.</title>
        <authorList>
            <person name="Holcomb I.N."/>
            <person name="Kabakoff R.C."/>
            <person name="Chan B."/>
            <person name="Baker T.W."/>
            <person name="Gurney A."/>
            <person name="Henzel W."/>
            <person name="Nelson C."/>
            <person name="Lowman H.B."/>
            <person name="Wright B.D."/>
            <person name="Skelton N.J."/>
            <person name="Frantz G.D."/>
            <person name="Tumas D.B."/>
            <person name="Peale F.V. Jr."/>
            <person name="Shelton D.L."/>
            <person name="Hebert C.C."/>
        </authorList>
    </citation>
    <scope>NUCLEOTIDE SEQUENCE [MRNA]</scope>
</reference>
<reference key="2">
    <citation type="journal article" date="2001" name="Proc. Natl. Acad. Sci. U.S.A.">
        <title>A family of tissue-specific resistin-like molecules.</title>
        <authorList>
            <person name="Steppan C.M."/>
            <person name="Brown E.J."/>
            <person name="Wright C.M."/>
            <person name="Bhat S."/>
            <person name="Banerjee R.R."/>
            <person name="Dai C.Y."/>
            <person name="Enders G.H."/>
            <person name="Silberg D.G."/>
            <person name="Wen X."/>
            <person name="Wu G.D."/>
            <person name="Lazar M.A."/>
        </authorList>
    </citation>
    <scope>NUCLEOTIDE SEQUENCE [MRNA]</scope>
</reference>
<reference key="3">
    <citation type="submission" date="2000-10" db="EMBL/GenBank/DDBJ databases">
        <title>PMNG1/FIZZ1 is an IL-4 dependent gene expressed by alternatively activated macrophages that are recruited by a Th2 inducing nematode parasite.</title>
        <authorList>
            <person name="Loke P."/>
            <person name="Nair M.G."/>
            <person name="Giuliano D.B."/>
            <person name="Allen J.E."/>
        </authorList>
    </citation>
    <scope>NUCLEOTIDE SEQUENCE [MRNA]</scope>
    <source>
        <strain>C57BL/6J</strain>
    </source>
</reference>
<reference key="4">
    <citation type="submission" date="2000-07" db="EMBL/GenBank/DDBJ databases">
        <title>Identification of a novel cysteine-rich secreted A12-alpha related protein.</title>
        <authorList>
            <person name="Rajala M.W."/>
            <person name="Scherer P.E."/>
        </authorList>
    </citation>
    <scope>NUCLEOTIDE SEQUENCE [MRNA]</scope>
</reference>
<reference key="5">
    <citation type="journal article" date="2005" name="Science">
        <title>The transcriptional landscape of the mammalian genome.</title>
        <authorList>
            <person name="Carninci P."/>
            <person name="Kasukawa T."/>
            <person name="Katayama S."/>
            <person name="Gough J."/>
            <person name="Frith M.C."/>
            <person name="Maeda N."/>
            <person name="Oyama R."/>
            <person name="Ravasi T."/>
            <person name="Lenhard B."/>
            <person name="Wells C."/>
            <person name="Kodzius R."/>
            <person name="Shimokawa K."/>
            <person name="Bajic V.B."/>
            <person name="Brenner S.E."/>
            <person name="Batalov S."/>
            <person name="Forrest A.R."/>
            <person name="Zavolan M."/>
            <person name="Davis M.J."/>
            <person name="Wilming L.G."/>
            <person name="Aidinis V."/>
            <person name="Allen J.E."/>
            <person name="Ambesi-Impiombato A."/>
            <person name="Apweiler R."/>
            <person name="Aturaliya R.N."/>
            <person name="Bailey T.L."/>
            <person name="Bansal M."/>
            <person name="Baxter L."/>
            <person name="Beisel K.W."/>
            <person name="Bersano T."/>
            <person name="Bono H."/>
            <person name="Chalk A.M."/>
            <person name="Chiu K.P."/>
            <person name="Choudhary V."/>
            <person name="Christoffels A."/>
            <person name="Clutterbuck D.R."/>
            <person name="Crowe M.L."/>
            <person name="Dalla E."/>
            <person name="Dalrymple B.P."/>
            <person name="de Bono B."/>
            <person name="Della Gatta G."/>
            <person name="di Bernardo D."/>
            <person name="Down T."/>
            <person name="Engstrom P."/>
            <person name="Fagiolini M."/>
            <person name="Faulkner G."/>
            <person name="Fletcher C.F."/>
            <person name="Fukushima T."/>
            <person name="Furuno M."/>
            <person name="Futaki S."/>
            <person name="Gariboldi M."/>
            <person name="Georgii-Hemming P."/>
            <person name="Gingeras T.R."/>
            <person name="Gojobori T."/>
            <person name="Green R.E."/>
            <person name="Gustincich S."/>
            <person name="Harbers M."/>
            <person name="Hayashi Y."/>
            <person name="Hensch T.K."/>
            <person name="Hirokawa N."/>
            <person name="Hill D."/>
            <person name="Huminiecki L."/>
            <person name="Iacono M."/>
            <person name="Ikeo K."/>
            <person name="Iwama A."/>
            <person name="Ishikawa T."/>
            <person name="Jakt M."/>
            <person name="Kanapin A."/>
            <person name="Katoh M."/>
            <person name="Kawasawa Y."/>
            <person name="Kelso J."/>
            <person name="Kitamura H."/>
            <person name="Kitano H."/>
            <person name="Kollias G."/>
            <person name="Krishnan S.P."/>
            <person name="Kruger A."/>
            <person name="Kummerfeld S.K."/>
            <person name="Kurochkin I.V."/>
            <person name="Lareau L.F."/>
            <person name="Lazarevic D."/>
            <person name="Lipovich L."/>
            <person name="Liu J."/>
            <person name="Liuni S."/>
            <person name="McWilliam S."/>
            <person name="Madan Babu M."/>
            <person name="Madera M."/>
            <person name="Marchionni L."/>
            <person name="Matsuda H."/>
            <person name="Matsuzawa S."/>
            <person name="Miki H."/>
            <person name="Mignone F."/>
            <person name="Miyake S."/>
            <person name="Morris K."/>
            <person name="Mottagui-Tabar S."/>
            <person name="Mulder N."/>
            <person name="Nakano N."/>
            <person name="Nakauchi H."/>
            <person name="Ng P."/>
            <person name="Nilsson R."/>
            <person name="Nishiguchi S."/>
            <person name="Nishikawa S."/>
            <person name="Nori F."/>
            <person name="Ohara O."/>
            <person name="Okazaki Y."/>
            <person name="Orlando V."/>
            <person name="Pang K.C."/>
            <person name="Pavan W.J."/>
            <person name="Pavesi G."/>
            <person name="Pesole G."/>
            <person name="Petrovsky N."/>
            <person name="Piazza S."/>
            <person name="Reed J."/>
            <person name="Reid J.F."/>
            <person name="Ring B.Z."/>
            <person name="Ringwald M."/>
            <person name="Rost B."/>
            <person name="Ruan Y."/>
            <person name="Salzberg S.L."/>
            <person name="Sandelin A."/>
            <person name="Schneider C."/>
            <person name="Schoenbach C."/>
            <person name="Sekiguchi K."/>
            <person name="Semple C.A."/>
            <person name="Seno S."/>
            <person name="Sessa L."/>
            <person name="Sheng Y."/>
            <person name="Shibata Y."/>
            <person name="Shimada H."/>
            <person name="Shimada K."/>
            <person name="Silva D."/>
            <person name="Sinclair B."/>
            <person name="Sperling S."/>
            <person name="Stupka E."/>
            <person name="Sugiura K."/>
            <person name="Sultana R."/>
            <person name="Takenaka Y."/>
            <person name="Taki K."/>
            <person name="Tammoja K."/>
            <person name="Tan S.L."/>
            <person name="Tang S."/>
            <person name="Taylor M.S."/>
            <person name="Tegner J."/>
            <person name="Teichmann S.A."/>
            <person name="Ueda H.R."/>
            <person name="van Nimwegen E."/>
            <person name="Verardo R."/>
            <person name="Wei C.L."/>
            <person name="Yagi K."/>
            <person name="Yamanishi H."/>
            <person name="Zabarovsky E."/>
            <person name="Zhu S."/>
            <person name="Zimmer A."/>
            <person name="Hide W."/>
            <person name="Bult C."/>
            <person name="Grimmond S.M."/>
            <person name="Teasdale R.D."/>
            <person name="Liu E.T."/>
            <person name="Brusic V."/>
            <person name="Quackenbush J."/>
            <person name="Wahlestedt C."/>
            <person name="Mattick J.S."/>
            <person name="Hume D.A."/>
            <person name="Kai C."/>
            <person name="Sasaki D."/>
            <person name="Tomaru Y."/>
            <person name="Fukuda S."/>
            <person name="Kanamori-Katayama M."/>
            <person name="Suzuki M."/>
            <person name="Aoki J."/>
            <person name="Arakawa T."/>
            <person name="Iida J."/>
            <person name="Imamura K."/>
            <person name="Itoh M."/>
            <person name="Kato T."/>
            <person name="Kawaji H."/>
            <person name="Kawagashira N."/>
            <person name="Kawashima T."/>
            <person name="Kojima M."/>
            <person name="Kondo S."/>
            <person name="Konno H."/>
            <person name="Nakano K."/>
            <person name="Ninomiya N."/>
            <person name="Nishio T."/>
            <person name="Okada M."/>
            <person name="Plessy C."/>
            <person name="Shibata K."/>
            <person name="Shiraki T."/>
            <person name="Suzuki S."/>
            <person name="Tagami M."/>
            <person name="Waki K."/>
            <person name="Watahiki A."/>
            <person name="Okamura-Oho Y."/>
            <person name="Suzuki H."/>
            <person name="Kawai J."/>
            <person name="Hayashizaki Y."/>
        </authorList>
    </citation>
    <scope>NUCLEOTIDE SEQUENCE [LARGE SCALE MRNA]</scope>
    <source>
        <strain>C57BL/6J</strain>
        <tissue>Pancreas</tissue>
    </source>
</reference>
<reference key="6">
    <citation type="journal article" date="2001" name="J. Biol. Chem.">
        <title>Dimerization of resistin and resistin-like molecules is determined by a single cysteine.</title>
        <authorList>
            <person name="Banerjee R.R."/>
            <person name="Lazar M.A."/>
        </authorList>
    </citation>
    <scope>SUBUNIT</scope>
</reference>
<reference key="7">
    <citation type="journal article" date="2010" name="PLoS ONE">
        <title>Hypoxia-induced mitogenic factor (HIMF/FIZZ1/RELM alpha) recruits bone marrow-derived cells to the murine pulmonary vasculature.</title>
        <authorList>
            <person name="Angelini D.J."/>
            <person name="Su Q."/>
            <person name="Kolosova I.A."/>
            <person name="Fan C."/>
            <person name="Skinner J.T."/>
            <person name="Yamaji-Kegan K."/>
            <person name="Collector M."/>
            <person name="Sharkis S.J."/>
            <person name="Johns R.A."/>
        </authorList>
    </citation>
    <scope>FUNCTION</scope>
</reference>
<sequence length="111" mass="11936">MKTTTCSLLICISLLQLMVPVNTDETIEIIVENKVKELLANPANYPSTVTKTLSCTSVKTMNRWASCPAGMTATGCACGFACGSWEIQSGDTCNCLCLLVDWTTARCCQLS</sequence>
<evidence type="ECO:0000250" key="1"/>
<evidence type="ECO:0000255" key="2"/>
<evidence type="ECO:0000269" key="3">
    <source>
    </source>
</evidence>
<evidence type="ECO:0000269" key="4">
    <source>
    </source>
</evidence>
<evidence type="ECO:0000305" key="5"/>
<name>RETNA_MOUSE</name>
<organism>
    <name type="scientific">Mus musculus</name>
    <name type="common">Mouse</name>
    <dbReference type="NCBI Taxonomy" id="10090"/>
    <lineage>
        <taxon>Eukaryota</taxon>
        <taxon>Metazoa</taxon>
        <taxon>Chordata</taxon>
        <taxon>Craniata</taxon>
        <taxon>Vertebrata</taxon>
        <taxon>Euteleostomi</taxon>
        <taxon>Mammalia</taxon>
        <taxon>Eutheria</taxon>
        <taxon>Euarchontoglires</taxon>
        <taxon>Glires</taxon>
        <taxon>Rodentia</taxon>
        <taxon>Myomorpha</taxon>
        <taxon>Muroidea</taxon>
        <taxon>Muridae</taxon>
        <taxon>Murinae</taxon>
        <taxon>Mus</taxon>
        <taxon>Mus</taxon>
    </lineage>
</organism>
<accession>Q9EP95</accession>
<accession>Q9D8Y4</accession>
<protein>
    <recommendedName>
        <fullName>Resistin-like alpha</fullName>
    </recommendedName>
    <alternativeName>
        <fullName>Cysteine-rich secreted protein A12-gamma</fullName>
    </alternativeName>
    <alternativeName>
        <fullName>Cysteine-rich secreted protein FIZZ1</fullName>
    </alternativeName>
    <alternativeName>
        <fullName>Hypoxia-induced mitogenic factor</fullName>
    </alternativeName>
    <alternativeName>
        <fullName>Parasite-induced macrophage novel gene 1 protein</fullName>
    </alternativeName>
    <alternativeName>
        <fullName>RELMalpha</fullName>
    </alternativeName>
</protein>
<keyword id="KW-1015">Disulfide bond</keyword>
<keyword id="KW-0372">Hormone</keyword>
<keyword id="KW-1185">Reference proteome</keyword>
<keyword id="KW-0964">Secreted</keyword>
<keyword id="KW-0732">Signal</keyword>